<feature type="chain" id="PRO_0000167865" description="Protein FixB">
    <location>
        <begin position="1"/>
        <end position="313"/>
    </location>
</feature>
<feature type="binding site" evidence="1">
    <location>
        <begin position="255"/>
        <end position="283"/>
    </location>
    <ligand>
        <name>FAD</name>
        <dbReference type="ChEBI" id="CHEBI:57692"/>
    </ligand>
</feature>
<reference key="1">
    <citation type="journal article" date="2001" name="Nature">
        <title>Complete genome sequence of a multiple drug resistant Salmonella enterica serovar Typhi CT18.</title>
        <authorList>
            <person name="Parkhill J."/>
            <person name="Dougan G."/>
            <person name="James K.D."/>
            <person name="Thomson N.R."/>
            <person name="Pickard D."/>
            <person name="Wain J."/>
            <person name="Churcher C.M."/>
            <person name="Mungall K.L."/>
            <person name="Bentley S.D."/>
            <person name="Holden M.T.G."/>
            <person name="Sebaihia M."/>
            <person name="Baker S."/>
            <person name="Basham D."/>
            <person name="Brooks K."/>
            <person name="Chillingworth T."/>
            <person name="Connerton P."/>
            <person name="Cronin A."/>
            <person name="Davis P."/>
            <person name="Davies R.M."/>
            <person name="Dowd L."/>
            <person name="White N."/>
            <person name="Farrar J."/>
            <person name="Feltwell T."/>
            <person name="Hamlin N."/>
            <person name="Haque A."/>
            <person name="Hien T.T."/>
            <person name="Holroyd S."/>
            <person name="Jagels K."/>
            <person name="Krogh A."/>
            <person name="Larsen T.S."/>
            <person name="Leather S."/>
            <person name="Moule S."/>
            <person name="O'Gaora P."/>
            <person name="Parry C."/>
            <person name="Quail M.A."/>
            <person name="Rutherford K.M."/>
            <person name="Simmonds M."/>
            <person name="Skelton J."/>
            <person name="Stevens K."/>
            <person name="Whitehead S."/>
            <person name="Barrell B.G."/>
        </authorList>
    </citation>
    <scope>NUCLEOTIDE SEQUENCE [LARGE SCALE GENOMIC DNA]</scope>
    <source>
        <strain>CT18</strain>
    </source>
</reference>
<reference key="2">
    <citation type="journal article" date="2003" name="J. Bacteriol.">
        <title>Comparative genomics of Salmonella enterica serovar Typhi strains Ty2 and CT18.</title>
        <authorList>
            <person name="Deng W."/>
            <person name="Liou S.-R."/>
            <person name="Plunkett G. III"/>
            <person name="Mayhew G.F."/>
            <person name="Rose D.J."/>
            <person name="Burland V."/>
            <person name="Kodoyianni V."/>
            <person name="Schwartz D.C."/>
            <person name="Blattner F.R."/>
        </authorList>
    </citation>
    <scope>NUCLEOTIDE SEQUENCE [LARGE SCALE GENOMIC DNA]</scope>
    <source>
        <strain>ATCC 700931 / Ty2</strain>
    </source>
</reference>
<name>FIXB_SALTI</name>
<organism>
    <name type="scientific">Salmonella typhi</name>
    <dbReference type="NCBI Taxonomy" id="90370"/>
    <lineage>
        <taxon>Bacteria</taxon>
        <taxon>Pseudomonadati</taxon>
        <taxon>Pseudomonadota</taxon>
        <taxon>Gammaproteobacteria</taxon>
        <taxon>Enterobacterales</taxon>
        <taxon>Enterobacteriaceae</taxon>
        <taxon>Salmonella</taxon>
    </lineage>
</organism>
<comment type="function">
    <text evidence="1">Required for anaerobic carnitine reduction. May bring reductant to CaiA.</text>
</comment>
<comment type="pathway">
    <text evidence="1">Amine and polyamine metabolism; carnitine metabolism.</text>
</comment>
<comment type="subunit">
    <text evidence="1">Heterodimer of FixA and FixB.</text>
</comment>
<comment type="similarity">
    <text evidence="1">Belongs to the ETF alpha-subunit/FixB family.</text>
</comment>
<keyword id="KW-0249">Electron transport</keyword>
<keyword id="KW-0274">FAD</keyword>
<keyword id="KW-0285">Flavoprotein</keyword>
<keyword id="KW-0813">Transport</keyword>
<dbReference type="EMBL" id="AL513382">
    <property type="protein sequence ID" value="CAD01230.1"/>
    <property type="molecule type" value="Genomic_DNA"/>
</dbReference>
<dbReference type="EMBL" id="AE014613">
    <property type="protein sequence ID" value="AAO67810.1"/>
    <property type="molecule type" value="Genomic_DNA"/>
</dbReference>
<dbReference type="RefSeq" id="NP_454686.1">
    <property type="nucleotide sequence ID" value="NC_003198.1"/>
</dbReference>
<dbReference type="RefSeq" id="WP_001032189.1">
    <property type="nucleotide sequence ID" value="NZ_WSUR01000028.1"/>
</dbReference>
<dbReference type="SMR" id="P64096"/>
<dbReference type="STRING" id="220341.gene:17584132"/>
<dbReference type="KEGG" id="stt:t0077"/>
<dbReference type="KEGG" id="sty:STY0086"/>
<dbReference type="PATRIC" id="fig|220341.7.peg.86"/>
<dbReference type="eggNOG" id="COG2025">
    <property type="taxonomic scope" value="Bacteria"/>
</dbReference>
<dbReference type="HOGENOM" id="CLU_034178_0_1_6"/>
<dbReference type="OMA" id="RYVFGNK"/>
<dbReference type="OrthoDB" id="9770286at2"/>
<dbReference type="UniPathway" id="UPA00117"/>
<dbReference type="Proteomes" id="UP000000541">
    <property type="component" value="Chromosome"/>
</dbReference>
<dbReference type="Proteomes" id="UP000002670">
    <property type="component" value="Chromosome"/>
</dbReference>
<dbReference type="GO" id="GO:0009055">
    <property type="term" value="F:electron transfer activity"/>
    <property type="evidence" value="ECO:0007669"/>
    <property type="project" value="InterPro"/>
</dbReference>
<dbReference type="GO" id="GO:0050660">
    <property type="term" value="F:flavin adenine dinucleotide binding"/>
    <property type="evidence" value="ECO:0007669"/>
    <property type="project" value="InterPro"/>
</dbReference>
<dbReference type="GO" id="GO:0009437">
    <property type="term" value="P:carnitine metabolic process"/>
    <property type="evidence" value="ECO:0007669"/>
    <property type="project" value="UniProtKB-UniRule"/>
</dbReference>
<dbReference type="GO" id="GO:0033539">
    <property type="term" value="P:fatty acid beta-oxidation using acyl-CoA dehydrogenase"/>
    <property type="evidence" value="ECO:0007669"/>
    <property type="project" value="TreeGrafter"/>
</dbReference>
<dbReference type="FunFam" id="3.40.50.1220:FF:000004">
    <property type="entry name" value="Electron transfer flavoprotein"/>
    <property type="match status" value="1"/>
</dbReference>
<dbReference type="FunFam" id="3.40.50.620:FF:000067">
    <property type="entry name" value="Protein FixB"/>
    <property type="match status" value="1"/>
</dbReference>
<dbReference type="Gene3D" id="3.40.50.620">
    <property type="entry name" value="HUPs"/>
    <property type="match status" value="1"/>
</dbReference>
<dbReference type="Gene3D" id="3.40.50.1220">
    <property type="entry name" value="TPP-binding domain"/>
    <property type="match status" value="1"/>
</dbReference>
<dbReference type="HAMAP" id="MF_01056">
    <property type="entry name" value="FixB"/>
    <property type="match status" value="1"/>
</dbReference>
<dbReference type="InterPro" id="IPR029035">
    <property type="entry name" value="DHS-like_NAD/FAD-binding_dom"/>
</dbReference>
<dbReference type="InterPro" id="IPR014730">
    <property type="entry name" value="ETF_a/b_N"/>
</dbReference>
<dbReference type="InterPro" id="IPR001308">
    <property type="entry name" value="ETF_a/FixB"/>
</dbReference>
<dbReference type="InterPro" id="IPR014731">
    <property type="entry name" value="ETF_asu_C"/>
</dbReference>
<dbReference type="InterPro" id="IPR018206">
    <property type="entry name" value="ETF_asu_C_CS"/>
</dbReference>
<dbReference type="InterPro" id="IPR023461">
    <property type="entry name" value="FixB"/>
</dbReference>
<dbReference type="InterPro" id="IPR014729">
    <property type="entry name" value="Rossmann-like_a/b/a_fold"/>
</dbReference>
<dbReference type="NCBIfam" id="NF002889">
    <property type="entry name" value="PRK03363.1"/>
    <property type="match status" value="1"/>
</dbReference>
<dbReference type="PANTHER" id="PTHR43153">
    <property type="entry name" value="ELECTRON TRANSFER FLAVOPROTEIN ALPHA"/>
    <property type="match status" value="1"/>
</dbReference>
<dbReference type="PANTHER" id="PTHR43153:SF5">
    <property type="entry name" value="PROTEIN FIXB-RELATED"/>
    <property type="match status" value="1"/>
</dbReference>
<dbReference type="Pfam" id="PF01012">
    <property type="entry name" value="ETF"/>
    <property type="match status" value="1"/>
</dbReference>
<dbReference type="Pfam" id="PF00766">
    <property type="entry name" value="ETF_alpha"/>
    <property type="match status" value="1"/>
</dbReference>
<dbReference type="PIRSF" id="PIRSF000089">
    <property type="entry name" value="Electra_flavoP_a"/>
    <property type="match status" value="1"/>
</dbReference>
<dbReference type="SMART" id="SM00893">
    <property type="entry name" value="ETF"/>
    <property type="match status" value="1"/>
</dbReference>
<dbReference type="SUPFAM" id="SSF52402">
    <property type="entry name" value="Adenine nucleotide alpha hydrolases-like"/>
    <property type="match status" value="1"/>
</dbReference>
<dbReference type="SUPFAM" id="SSF52467">
    <property type="entry name" value="DHS-like NAD/FAD-binding domain"/>
    <property type="match status" value="1"/>
</dbReference>
<dbReference type="PROSITE" id="PS00696">
    <property type="entry name" value="ETF_ALPHA"/>
    <property type="match status" value="1"/>
</dbReference>
<accession>P64096</accession>
<accession>Q8XH05</accession>
<protein>
    <recommendedName>
        <fullName evidence="1">Protein FixB</fullName>
    </recommendedName>
</protein>
<proteinExistence type="inferred from homology"/>
<sequence>MNKFSSVWVFSDTPSRLPELMSGAQAVGEKVNAFVLNEADSATACHLGADHVWLLSGKPEDRMIEDYAAAMAETIRQHSEGGAVLLPNTRRGKLLAAKLGYRLSAAVSNDASDVSLQDGKAAVKHMVYGGLAIGAETIASPFAVITLSSGTFDAQQPDASRSGEMHTVQWQAPATAVTRTATQARQSNSVDLDKARLVVSVGRGIGSKENISLAEALCQTIGAELACSRPVAENEKWMEHERYVGISNLMLKPELYLAVGISGQIQHMVGANGAQTIFAINKDKNAPIFQYADFGIVGDALKILPALTAALAR</sequence>
<evidence type="ECO:0000255" key="1">
    <source>
        <dbReference type="HAMAP-Rule" id="MF_01056"/>
    </source>
</evidence>
<gene>
    <name evidence="1" type="primary">fixB</name>
    <name type="ordered locus">STY0086</name>
    <name type="ordered locus">t0077</name>
</gene>